<reference key="1">
    <citation type="journal article" date="2008" name="J. Bacteriol.">
        <title>The pangenome structure of Escherichia coli: comparative genomic analysis of E. coli commensal and pathogenic isolates.</title>
        <authorList>
            <person name="Rasko D.A."/>
            <person name="Rosovitz M.J."/>
            <person name="Myers G.S.A."/>
            <person name="Mongodin E.F."/>
            <person name="Fricke W.F."/>
            <person name="Gajer P."/>
            <person name="Crabtree J."/>
            <person name="Sebaihia M."/>
            <person name="Thomson N.R."/>
            <person name="Chaudhuri R."/>
            <person name="Henderson I.R."/>
            <person name="Sperandio V."/>
            <person name="Ravel J."/>
        </authorList>
    </citation>
    <scope>NUCLEOTIDE SEQUENCE [LARGE SCALE GENOMIC DNA]</scope>
    <source>
        <strain>E24377A / ETEC</strain>
    </source>
</reference>
<feature type="chain" id="PRO_1000059704" description="Oxygen-dependent coproporphyrinogen-III oxidase">
    <location>
        <begin position="1"/>
        <end position="299"/>
    </location>
</feature>
<feature type="region of interest" description="Important for dimerization" evidence="1">
    <location>
        <begin position="240"/>
        <end position="275"/>
    </location>
</feature>
<feature type="active site" description="Proton donor" evidence="1">
    <location>
        <position position="106"/>
    </location>
</feature>
<feature type="binding site" evidence="1">
    <location>
        <position position="92"/>
    </location>
    <ligand>
        <name>substrate</name>
    </ligand>
</feature>
<feature type="binding site" evidence="1">
    <location>
        <position position="96"/>
    </location>
    <ligand>
        <name>Mn(2+)</name>
        <dbReference type="ChEBI" id="CHEBI:29035"/>
    </ligand>
</feature>
<feature type="binding site" evidence="1">
    <location>
        <position position="106"/>
    </location>
    <ligand>
        <name>Mn(2+)</name>
        <dbReference type="ChEBI" id="CHEBI:29035"/>
    </ligand>
</feature>
<feature type="binding site" evidence="1">
    <location>
        <begin position="108"/>
        <end position="110"/>
    </location>
    <ligand>
        <name>substrate</name>
    </ligand>
</feature>
<feature type="binding site" evidence="1">
    <location>
        <position position="145"/>
    </location>
    <ligand>
        <name>Mn(2+)</name>
        <dbReference type="ChEBI" id="CHEBI:29035"/>
    </ligand>
</feature>
<feature type="binding site" evidence="1">
    <location>
        <position position="175"/>
    </location>
    <ligand>
        <name>Mn(2+)</name>
        <dbReference type="ChEBI" id="CHEBI:29035"/>
    </ligand>
</feature>
<feature type="binding site" evidence="1">
    <location>
        <begin position="258"/>
        <end position="260"/>
    </location>
    <ligand>
        <name>substrate</name>
    </ligand>
</feature>
<feature type="site" description="Important for dimerization" evidence="1">
    <location>
        <position position="175"/>
    </location>
</feature>
<name>HEM6_ECO24</name>
<protein>
    <recommendedName>
        <fullName evidence="1">Oxygen-dependent coproporphyrinogen-III oxidase</fullName>
        <shortName evidence="1">CPO</shortName>
        <shortName evidence="1">Coprogen oxidase</shortName>
        <shortName evidence="1">Coproporphyrinogenase</shortName>
        <ecNumber evidence="1">1.3.3.3</ecNumber>
    </recommendedName>
</protein>
<dbReference type="EC" id="1.3.3.3" evidence="1"/>
<dbReference type="EMBL" id="CP000800">
    <property type="protein sequence ID" value="ABV18009.1"/>
    <property type="molecule type" value="Genomic_DNA"/>
</dbReference>
<dbReference type="RefSeq" id="WP_000801367.1">
    <property type="nucleotide sequence ID" value="NC_009801.1"/>
</dbReference>
<dbReference type="SMR" id="A7ZPN6"/>
<dbReference type="GeneID" id="93774695"/>
<dbReference type="KEGG" id="ecw:EcE24377A_2722"/>
<dbReference type="HOGENOM" id="CLU_026169_0_1_6"/>
<dbReference type="UniPathway" id="UPA00251">
    <property type="reaction ID" value="UER00322"/>
</dbReference>
<dbReference type="Proteomes" id="UP000001122">
    <property type="component" value="Chromosome"/>
</dbReference>
<dbReference type="GO" id="GO:0005737">
    <property type="term" value="C:cytoplasm"/>
    <property type="evidence" value="ECO:0007669"/>
    <property type="project" value="UniProtKB-SubCell"/>
</dbReference>
<dbReference type="GO" id="GO:0004109">
    <property type="term" value="F:coproporphyrinogen oxidase activity"/>
    <property type="evidence" value="ECO:0007669"/>
    <property type="project" value="UniProtKB-UniRule"/>
</dbReference>
<dbReference type="GO" id="GO:0030145">
    <property type="term" value="F:manganese ion binding"/>
    <property type="evidence" value="ECO:0007669"/>
    <property type="project" value="UniProtKB-UniRule"/>
</dbReference>
<dbReference type="GO" id="GO:0042803">
    <property type="term" value="F:protein homodimerization activity"/>
    <property type="evidence" value="ECO:0000250"/>
    <property type="project" value="UniProtKB"/>
</dbReference>
<dbReference type="GO" id="GO:0006782">
    <property type="term" value="P:protoporphyrinogen IX biosynthetic process"/>
    <property type="evidence" value="ECO:0007669"/>
    <property type="project" value="UniProtKB-UniRule"/>
</dbReference>
<dbReference type="FunFam" id="3.40.1500.10:FF:000001">
    <property type="entry name" value="Oxygen-dependent coproporphyrinogen-III oxidase"/>
    <property type="match status" value="1"/>
</dbReference>
<dbReference type="Gene3D" id="3.40.1500.10">
    <property type="entry name" value="Coproporphyrinogen III oxidase, aerobic"/>
    <property type="match status" value="1"/>
</dbReference>
<dbReference type="HAMAP" id="MF_00333">
    <property type="entry name" value="Coprogen_oxidas"/>
    <property type="match status" value="1"/>
</dbReference>
<dbReference type="InterPro" id="IPR001260">
    <property type="entry name" value="Coprogen_oxidase_aer"/>
</dbReference>
<dbReference type="InterPro" id="IPR036406">
    <property type="entry name" value="Coprogen_oxidase_aer_sf"/>
</dbReference>
<dbReference type="InterPro" id="IPR018375">
    <property type="entry name" value="Coprogen_oxidase_CS"/>
</dbReference>
<dbReference type="NCBIfam" id="NF003727">
    <property type="entry name" value="PRK05330.1"/>
    <property type="match status" value="1"/>
</dbReference>
<dbReference type="PANTHER" id="PTHR10755">
    <property type="entry name" value="COPROPORPHYRINOGEN III OXIDASE, MITOCHONDRIAL"/>
    <property type="match status" value="1"/>
</dbReference>
<dbReference type="PANTHER" id="PTHR10755:SF0">
    <property type="entry name" value="OXYGEN-DEPENDENT COPROPORPHYRINOGEN-III OXIDASE, MITOCHONDRIAL"/>
    <property type="match status" value="1"/>
</dbReference>
<dbReference type="Pfam" id="PF01218">
    <property type="entry name" value="Coprogen_oxidas"/>
    <property type="match status" value="1"/>
</dbReference>
<dbReference type="PIRSF" id="PIRSF000166">
    <property type="entry name" value="Coproporphyri_ox"/>
    <property type="match status" value="1"/>
</dbReference>
<dbReference type="PRINTS" id="PR00073">
    <property type="entry name" value="COPRGNOXDASE"/>
</dbReference>
<dbReference type="SUPFAM" id="SSF102886">
    <property type="entry name" value="Coproporphyrinogen III oxidase"/>
    <property type="match status" value="1"/>
</dbReference>
<dbReference type="PROSITE" id="PS01021">
    <property type="entry name" value="COPROGEN_OXIDASE"/>
    <property type="match status" value="1"/>
</dbReference>
<sequence length="299" mass="34304">MKPDAHQVKQFLLNLQDTICQQLTAVDGAEFVEDSWQREAGGGGRSRVLRNGGVFEQAGVNFSHVHGEAMPASATAHRPELAGRSFEAMGVSLVVHPHNPYVPTSHANVRFFIAEKPGAEPVWWFGGGFDLTPFYGFEEDAIHWHRTARDLCLPFGEDVYPRYKKWCDDYFYLKHRNEQRGIGGLFFDDLNTPDFDHCFAFMQAVGKGYTDAYLPIVERRKAMAYGERERNFQLYRRGRYVEFNLVWDRGTLFGLQTGGRTESILMSMPPLVRWEYDYQPKDGSPEAALSEFIKVRDWV</sequence>
<evidence type="ECO:0000255" key="1">
    <source>
        <dbReference type="HAMAP-Rule" id="MF_00333"/>
    </source>
</evidence>
<comment type="function">
    <text evidence="1">Involved in the heme biosynthesis. Catalyzes the aerobic oxidative decarboxylation of propionate groups of rings A and B of coproporphyrinogen-III to yield the vinyl groups in protoporphyrinogen-IX.</text>
</comment>
<comment type="catalytic activity">
    <reaction evidence="1">
        <text>coproporphyrinogen III + O2 + 2 H(+) = protoporphyrinogen IX + 2 CO2 + 2 H2O</text>
        <dbReference type="Rhea" id="RHEA:18257"/>
        <dbReference type="ChEBI" id="CHEBI:15377"/>
        <dbReference type="ChEBI" id="CHEBI:15378"/>
        <dbReference type="ChEBI" id="CHEBI:15379"/>
        <dbReference type="ChEBI" id="CHEBI:16526"/>
        <dbReference type="ChEBI" id="CHEBI:57307"/>
        <dbReference type="ChEBI" id="CHEBI:57309"/>
        <dbReference type="EC" id="1.3.3.3"/>
    </reaction>
</comment>
<comment type="cofactor">
    <cofactor evidence="1">
        <name>Mn(2+)</name>
        <dbReference type="ChEBI" id="CHEBI:29035"/>
    </cofactor>
</comment>
<comment type="pathway">
    <text evidence="1">Porphyrin-containing compound metabolism; protoporphyrin-IX biosynthesis; protoporphyrinogen-IX from coproporphyrinogen-III (O2 route): step 1/1.</text>
</comment>
<comment type="subunit">
    <text evidence="1">Homodimer.</text>
</comment>
<comment type="subcellular location">
    <subcellularLocation>
        <location evidence="1">Cytoplasm</location>
    </subcellularLocation>
</comment>
<comment type="similarity">
    <text evidence="1">Belongs to the aerobic coproporphyrinogen-III oxidase family.</text>
</comment>
<organism>
    <name type="scientific">Escherichia coli O139:H28 (strain E24377A / ETEC)</name>
    <dbReference type="NCBI Taxonomy" id="331111"/>
    <lineage>
        <taxon>Bacteria</taxon>
        <taxon>Pseudomonadati</taxon>
        <taxon>Pseudomonadota</taxon>
        <taxon>Gammaproteobacteria</taxon>
        <taxon>Enterobacterales</taxon>
        <taxon>Enterobacteriaceae</taxon>
        <taxon>Escherichia</taxon>
    </lineage>
</organism>
<gene>
    <name evidence="1" type="primary">hemF</name>
    <name type="ordered locus">EcE24377A_2722</name>
</gene>
<proteinExistence type="inferred from homology"/>
<accession>A7ZPN6</accession>
<keyword id="KW-0963">Cytoplasm</keyword>
<keyword id="KW-0350">Heme biosynthesis</keyword>
<keyword id="KW-0464">Manganese</keyword>
<keyword id="KW-0479">Metal-binding</keyword>
<keyword id="KW-0560">Oxidoreductase</keyword>
<keyword id="KW-0627">Porphyrin biosynthesis</keyword>
<keyword id="KW-1185">Reference proteome</keyword>